<accession>B0TIR7</accession>
<proteinExistence type="inferred from homology"/>
<dbReference type="EC" id="2.7.1.170" evidence="1"/>
<dbReference type="EMBL" id="CP000931">
    <property type="protein sequence ID" value="ABZ75612.1"/>
    <property type="molecule type" value="Genomic_DNA"/>
</dbReference>
<dbReference type="RefSeq" id="WP_012276159.1">
    <property type="nucleotide sequence ID" value="NC_010334.1"/>
</dbReference>
<dbReference type="SMR" id="B0TIR7"/>
<dbReference type="STRING" id="458817.Shal_1043"/>
<dbReference type="KEGG" id="shl:Shal_1043"/>
<dbReference type="eggNOG" id="COG2377">
    <property type="taxonomic scope" value="Bacteria"/>
</dbReference>
<dbReference type="HOGENOM" id="CLU_038782_0_0_6"/>
<dbReference type="OrthoDB" id="9763949at2"/>
<dbReference type="UniPathway" id="UPA00343"/>
<dbReference type="UniPathway" id="UPA00544"/>
<dbReference type="Proteomes" id="UP000001317">
    <property type="component" value="Chromosome"/>
</dbReference>
<dbReference type="GO" id="GO:0005524">
    <property type="term" value="F:ATP binding"/>
    <property type="evidence" value="ECO:0007669"/>
    <property type="project" value="UniProtKB-UniRule"/>
</dbReference>
<dbReference type="GO" id="GO:0016301">
    <property type="term" value="F:kinase activity"/>
    <property type="evidence" value="ECO:0007669"/>
    <property type="project" value="UniProtKB-KW"/>
</dbReference>
<dbReference type="GO" id="GO:0016773">
    <property type="term" value="F:phosphotransferase activity, alcohol group as acceptor"/>
    <property type="evidence" value="ECO:0007669"/>
    <property type="project" value="UniProtKB-UniRule"/>
</dbReference>
<dbReference type="GO" id="GO:0097175">
    <property type="term" value="P:1,6-anhydro-N-acetyl-beta-muramic acid catabolic process"/>
    <property type="evidence" value="ECO:0007669"/>
    <property type="project" value="UniProtKB-UniRule"/>
</dbReference>
<dbReference type="GO" id="GO:0006040">
    <property type="term" value="P:amino sugar metabolic process"/>
    <property type="evidence" value="ECO:0007669"/>
    <property type="project" value="InterPro"/>
</dbReference>
<dbReference type="GO" id="GO:0009254">
    <property type="term" value="P:peptidoglycan turnover"/>
    <property type="evidence" value="ECO:0007669"/>
    <property type="project" value="UniProtKB-UniRule"/>
</dbReference>
<dbReference type="CDD" id="cd24050">
    <property type="entry name" value="ASKHA_NBD_ANMK"/>
    <property type="match status" value="1"/>
</dbReference>
<dbReference type="Gene3D" id="3.30.420.40">
    <property type="match status" value="2"/>
</dbReference>
<dbReference type="HAMAP" id="MF_01270">
    <property type="entry name" value="AnhMurNAc_kinase"/>
    <property type="match status" value="1"/>
</dbReference>
<dbReference type="InterPro" id="IPR005338">
    <property type="entry name" value="Anhydro_N_Ac-Mur_kinase"/>
</dbReference>
<dbReference type="InterPro" id="IPR043129">
    <property type="entry name" value="ATPase_NBD"/>
</dbReference>
<dbReference type="NCBIfam" id="NF007139">
    <property type="entry name" value="PRK09585.1-3"/>
    <property type="match status" value="1"/>
</dbReference>
<dbReference type="NCBIfam" id="NF007148">
    <property type="entry name" value="PRK09585.3-2"/>
    <property type="match status" value="1"/>
</dbReference>
<dbReference type="PANTHER" id="PTHR30605">
    <property type="entry name" value="ANHYDRO-N-ACETYLMURAMIC ACID KINASE"/>
    <property type="match status" value="1"/>
</dbReference>
<dbReference type="PANTHER" id="PTHR30605:SF0">
    <property type="entry name" value="ANHYDRO-N-ACETYLMURAMIC ACID KINASE"/>
    <property type="match status" value="1"/>
</dbReference>
<dbReference type="Pfam" id="PF03702">
    <property type="entry name" value="AnmK"/>
    <property type="match status" value="1"/>
</dbReference>
<dbReference type="SUPFAM" id="SSF53067">
    <property type="entry name" value="Actin-like ATPase domain"/>
    <property type="match status" value="1"/>
</dbReference>
<gene>
    <name evidence="1" type="primary">anmK</name>
    <name type="ordered locus">Shal_1043</name>
</gene>
<name>ANMK_SHEHH</name>
<feature type="chain" id="PRO_1000085838" description="Anhydro-N-acetylmuramic acid kinase">
    <location>
        <begin position="1"/>
        <end position="369"/>
    </location>
</feature>
<feature type="binding site" evidence="1">
    <location>
        <begin position="12"/>
        <end position="19"/>
    </location>
    <ligand>
        <name>ATP</name>
        <dbReference type="ChEBI" id="CHEBI:30616"/>
    </ligand>
</feature>
<protein>
    <recommendedName>
        <fullName evidence="1">Anhydro-N-acetylmuramic acid kinase</fullName>
        <ecNumber evidence="1">2.7.1.170</ecNumber>
    </recommendedName>
    <alternativeName>
        <fullName evidence="1">AnhMurNAc kinase</fullName>
    </alternativeName>
</protein>
<keyword id="KW-0067">ATP-binding</keyword>
<keyword id="KW-0119">Carbohydrate metabolism</keyword>
<keyword id="KW-0418">Kinase</keyword>
<keyword id="KW-0547">Nucleotide-binding</keyword>
<keyword id="KW-0808">Transferase</keyword>
<reference key="1">
    <citation type="submission" date="2008-01" db="EMBL/GenBank/DDBJ databases">
        <title>Complete sequence of Shewanella halifaxensis HAW-EB4.</title>
        <authorList>
            <consortium name="US DOE Joint Genome Institute"/>
            <person name="Copeland A."/>
            <person name="Lucas S."/>
            <person name="Lapidus A."/>
            <person name="Glavina del Rio T."/>
            <person name="Dalin E."/>
            <person name="Tice H."/>
            <person name="Bruce D."/>
            <person name="Goodwin L."/>
            <person name="Pitluck S."/>
            <person name="Sims D."/>
            <person name="Brettin T."/>
            <person name="Detter J.C."/>
            <person name="Han C."/>
            <person name="Kuske C.R."/>
            <person name="Schmutz J."/>
            <person name="Larimer F."/>
            <person name="Land M."/>
            <person name="Hauser L."/>
            <person name="Kyrpides N."/>
            <person name="Kim E."/>
            <person name="Zhao J.-S."/>
            <person name="Richardson P."/>
        </authorList>
    </citation>
    <scope>NUCLEOTIDE SEQUENCE [LARGE SCALE GENOMIC DNA]</scope>
    <source>
        <strain>HAW-EB4</strain>
    </source>
</reference>
<sequence>MNNSYYVGLMSGTSMDGVDAVLVNFDGDQPSLIATHTEALPKALLSNLQKLCLPGNDEINRLGHLDRAMGKLFAKATNALLEKAGVDKSQVIAIGSHGQTVRHMPNLEMGFTLQIADPNTIAAETGIDVIADFRRKDIALGGQGAPLVPAFHQHVFANPNHQRIILNIGGIANVTYLPGNTQDVTGFDTGPGNGLSDAWIQHQLGQPFDKDGAWAASGTTDQKMLQHLLSHPYFALAAPKSTGRELFNQAWAEQQLSEFGHLSEADIQSTLLDLTCYSIANDALTLSDNGEMYVCGGGAYNCELMHRLRKLLPDYKVVTTSELGMDPQWVEGIAFAWLAMRHHNGLPGNLPAVTGASREAILGSFHPAD</sequence>
<organism>
    <name type="scientific">Shewanella halifaxensis (strain HAW-EB4)</name>
    <dbReference type="NCBI Taxonomy" id="458817"/>
    <lineage>
        <taxon>Bacteria</taxon>
        <taxon>Pseudomonadati</taxon>
        <taxon>Pseudomonadota</taxon>
        <taxon>Gammaproteobacteria</taxon>
        <taxon>Alteromonadales</taxon>
        <taxon>Shewanellaceae</taxon>
        <taxon>Shewanella</taxon>
    </lineage>
</organism>
<comment type="function">
    <text evidence="1">Catalyzes the specific phosphorylation of 1,6-anhydro-N-acetylmuramic acid (anhMurNAc) with the simultaneous cleavage of the 1,6-anhydro ring, generating MurNAc-6-P. Is required for the utilization of anhMurNAc either imported from the medium or derived from its own cell wall murein, and thus plays a role in cell wall recycling.</text>
</comment>
<comment type="catalytic activity">
    <reaction evidence="1">
        <text>1,6-anhydro-N-acetyl-beta-muramate + ATP + H2O = N-acetyl-D-muramate 6-phosphate + ADP + H(+)</text>
        <dbReference type="Rhea" id="RHEA:24952"/>
        <dbReference type="ChEBI" id="CHEBI:15377"/>
        <dbReference type="ChEBI" id="CHEBI:15378"/>
        <dbReference type="ChEBI" id="CHEBI:30616"/>
        <dbReference type="ChEBI" id="CHEBI:58690"/>
        <dbReference type="ChEBI" id="CHEBI:58722"/>
        <dbReference type="ChEBI" id="CHEBI:456216"/>
        <dbReference type="EC" id="2.7.1.170"/>
    </reaction>
</comment>
<comment type="pathway">
    <text evidence="1">Amino-sugar metabolism; 1,6-anhydro-N-acetylmuramate degradation.</text>
</comment>
<comment type="pathway">
    <text evidence="1">Cell wall biogenesis; peptidoglycan recycling.</text>
</comment>
<comment type="similarity">
    <text evidence="1">Belongs to the anhydro-N-acetylmuramic acid kinase family.</text>
</comment>
<evidence type="ECO:0000255" key="1">
    <source>
        <dbReference type="HAMAP-Rule" id="MF_01270"/>
    </source>
</evidence>